<reference key="1">
    <citation type="submission" date="1997-08" db="EMBL/GenBank/DDBJ databases">
        <title>Sus scrofa glyceraldehyde-3-phosphate dehydrogenase, genomic and cDNA sequences.</title>
        <authorList>
            <person name="Behdjani R."/>
            <person name="Silversides D.W."/>
        </authorList>
    </citation>
    <scope>NUCLEOTIDE SEQUENCE [MRNA]</scope>
</reference>
<reference key="2">
    <citation type="submission" date="1997-01" db="EMBL/GenBank/DDBJ databases">
        <title>Evaluation and characterization of a porcine small intestine cDNA library.</title>
        <authorList>
            <person name="Winteroe A.K."/>
            <person name="Fredholm M."/>
        </authorList>
    </citation>
    <scope>NUCLEOTIDE SEQUENCE [LARGE SCALE MRNA] OF 1-126</scope>
    <source>
        <tissue>Small intestine</tissue>
    </source>
</reference>
<reference key="3">
    <citation type="journal article" date="1968" name="Nature">
        <title>Glyceraldehyde 3-phosphate dehydrogenase from pig muscle.</title>
        <authorList>
            <person name="Harris J.I."/>
            <person name="Perham R.N."/>
        </authorList>
    </citation>
    <scope>PROTEIN SEQUENCE OF 2-333</scope>
</reference>
<reference key="4">
    <citation type="book" date="1970" name="Enzymes and isoenzymes: structure, properties and function">
        <editorList>
            <person name="Shugar D."/>
        </editorList>
        <authorList>
            <person name="Harris J.I."/>
            <person name="Davidson B.E."/>
            <person name="Sajgo M."/>
            <person name="Noller H.F."/>
            <person name="Perham R.N."/>
        </authorList>
    </citation>
    <scope>SEQUENCE REVISION TO 46</scope>
</reference>
<reference key="5">
    <citation type="journal article" date="1975" name="Biochem. Biophys. Res. Commun.">
        <title>Structural evidence for a liver-specific glyceraldehyde-3-phosphate dehydrogenase.</title>
        <authorList>
            <person name="Kulbe K.D."/>
            <person name="Jackson K.W."/>
            <person name="Tang J."/>
        </authorList>
    </citation>
    <scope>PROTEIN SEQUENCE OF 2-23</scope>
    <source>
        <tissue>Liver</tissue>
    </source>
</reference>
<reference key="6">
    <citation type="submission" date="1996-02" db="EMBL/GenBank/DDBJ databases">
        <authorList>
            <person name="Foss D.L."/>
            <person name="Murtaugh M.P."/>
        </authorList>
    </citation>
    <scope>NUCLEOTIDE SEQUENCE [MRNA] OF 15-301</scope>
</reference>
<reference key="7">
    <citation type="journal article" date="1997" name="Biol. Reprod.">
        <title>Detection of transcripts for retinoic acid receptors, retinol-binding protein, and transforming growth factors during rapid trophoblastic elongation in the porcine conceptus.</title>
        <authorList>
            <person name="Yelich J.V."/>
            <person name="Pomp D."/>
            <person name="Geisert R.D."/>
        </authorList>
    </citation>
    <scope>NUCLEOTIDE SEQUENCE [MRNA] OF 174-323</scope>
</reference>
<reference key="8">
    <citation type="submission" date="1995-12" db="EMBL/GenBank/DDBJ databases">
        <title>Isolation and characterization of cDNA clones coding for porcine muscle proteins.</title>
        <authorList>
            <person name="Davoli R."/>
            <person name="Zambonelli P."/>
            <person name="Fontanesi L."/>
            <person name="Bigi D."/>
            <person name="Costosi E."/>
            <person name="Russo V."/>
        </authorList>
    </citation>
    <scope>NUCLEOTIDE SEQUENCE [MRNA] OF 299-333</scope>
    <source>
        <tissue>Skeletal muscle</tissue>
    </source>
</reference>
<gene>
    <name type="primary">GAPDH</name>
    <name type="synonym">GAPD</name>
</gene>
<comment type="function">
    <text evidence="1 2">Has both glyceraldehyde-3-phosphate dehydrogenase and nitrosylase activities, thereby playing a role in glycolysis and nuclear functions, respectively. Glyceraldehyde-3-phosphate dehydrogenase is a key enzyme in glycolysis that catalyzes the first step of the pathway by converting D-glyceraldehyde 3-phosphate (G3P) into 3-phospho-D-glyceroyl phosphate (By similarity). Modulates the organization and assembly of the cytoskeleton. Facilitates the CHP1-dependent microtubule and membrane associations through its ability to stimulate the binding of CHP1 to microtubules (By similarity). Component of the GAIT (gamma interferon-activated inhibitor of translation) complex which mediates interferon-gamma-induced transcript-selective translation inhibition in inflammation processes. Upon interferon-gamma treatment assembles into the GAIT complex which binds to stem loop-containing GAIT elements in the 3'-UTR of diverse inflammatory mRNAs (such as ceruplasmin) and suppresses their translation. Also plays a role in innate immunity by promoting TNF-induced NF-kappa-B activation and type I interferon production, via interaction with TRAF2 and TRAF3, respectively (By similarity). Participates in nuclear events including transcription, RNA transport, DNA replication and apoptosis. Nuclear functions are probably due to the nitrosylase activity that mediates cysteine S-nitrosylation of nuclear target proteins such as SIRT1, HDAC2 and PRKDC (By similarity).</text>
</comment>
<comment type="catalytic activity">
    <reaction evidence="1 6">
        <text>D-glyceraldehyde 3-phosphate + phosphate + NAD(+) = (2R)-3-phospho-glyceroyl phosphate + NADH + H(+)</text>
        <dbReference type="Rhea" id="RHEA:10300"/>
        <dbReference type="ChEBI" id="CHEBI:15378"/>
        <dbReference type="ChEBI" id="CHEBI:43474"/>
        <dbReference type="ChEBI" id="CHEBI:57540"/>
        <dbReference type="ChEBI" id="CHEBI:57604"/>
        <dbReference type="ChEBI" id="CHEBI:57945"/>
        <dbReference type="ChEBI" id="CHEBI:59776"/>
        <dbReference type="EC" id="1.2.1.12"/>
    </reaction>
</comment>
<comment type="catalytic activity">
    <reaction evidence="2">
        <text>S-nitroso-L-cysteinyl-[GAPDH] + L-cysteinyl-[protein] = L-cysteinyl-[GAPDH] + S-nitroso-L-cysteinyl-[protein]</text>
        <dbReference type="Rhea" id="RHEA:66684"/>
        <dbReference type="Rhea" id="RHEA-COMP:10131"/>
        <dbReference type="Rhea" id="RHEA-COMP:17089"/>
        <dbReference type="Rhea" id="RHEA-COMP:17090"/>
        <dbReference type="Rhea" id="RHEA-COMP:17091"/>
        <dbReference type="ChEBI" id="CHEBI:29950"/>
        <dbReference type="ChEBI" id="CHEBI:149494"/>
    </reaction>
    <physiologicalReaction direction="left-to-right" evidence="2">
        <dbReference type="Rhea" id="RHEA:66685"/>
    </physiologicalReaction>
</comment>
<comment type="activity regulation">
    <text evidence="2">Glyceraldehyde-3-phosphate dehydrogenase activity is inhibited by fumarate, via the formation of S-(2-succinyl)cysteine residues.</text>
</comment>
<comment type="pathway">
    <text>Carbohydrate degradation; glycolysis; pyruvate from D-glyceraldehyde 3-phosphate: step 1/5.</text>
</comment>
<comment type="subunit">
    <text evidence="1 2 3">Homotetramer (By similarity). Interacts with TPPP; the interaction is direct (By similarity). Interacts (when S-nitrosylated) with SIAH1; leading to nuclear translocation. Interacts with RILPL1/GOSPEL, leading to prevent the interaction between GAPDH and SIAH1 and prevent nuclear translocation. Interacts with CHP1; the interaction increases the binding of CHP1 with microtubules. Associates with microtubules (By similarity). Interacts with EIF1AD, USP25, PRKCI and WARS1. Interacts with phosphorylated RPL13A; inhibited by oxidatively-modified low-densitity lipoprotein (LDL(ox)). Component of the GAIT complex. Interacts with FKBP6; leading to inhibit GAPDH catalytic activity. Interacts with TRAF2, promoting TRAF2 ubiquitination. Interacts with TRAF3, promoting TRAF3 ubiquitination (By similarity).</text>
</comment>
<comment type="subcellular location">
    <subcellularLocation>
        <location evidence="2">Cytoplasm</location>
        <location evidence="2">Cytosol</location>
    </subcellularLocation>
    <subcellularLocation>
        <location evidence="2">Cytoplasm</location>
        <location evidence="2">Cytoskeleton</location>
    </subcellularLocation>
    <subcellularLocation>
        <location evidence="2">Nucleus</location>
    </subcellularLocation>
    <text evidence="2">Translocates to the nucleus following S-nitrosylation and interaction with SIAH1, which contains a nuclear localization signal. Colocalizes with CHP1 to small punctate structures along the microtubules tracks.</text>
</comment>
<comment type="domain">
    <text evidence="1">The [IL]-x-C-x-x-[DE] motif is a proposed target motif for cysteine S-nitrosylation mediated by the iNOS-S100A8/A9 transnitrosylase complex.</text>
</comment>
<comment type="PTM">
    <text evidence="1">ISGylated.</text>
</comment>
<comment type="PTM">
    <text evidence="1 2">S-nitrosylation of Cys-150 leads to interaction with SIAH1, followed by translocation to the nucleus S-nitrosylation of Cys-245 is induced by interferon-gamma and LDL(ox) implicating the iNOS-S100A8/9 transnitrosylase complex and seems to prevent interaction with phosphorylated RPL13A and to interfere with GAIT complex activity (By similarity).</text>
</comment>
<comment type="PTM">
    <text evidence="4">Sulfhydration at Cys-150 increases catalytic activity.</text>
</comment>
<comment type="PTM">
    <text evidence="1">Oxidative stress can promote the formation of high molecular weight disulfide-linked GAPDH aggregates, through a process called nucleocytoplasmic coagulation.</text>
</comment>
<comment type="similarity">
    <text evidence="9">Belongs to the glyceraldehyde-3-phosphate dehydrogenase family.</text>
</comment>
<protein>
    <recommendedName>
        <fullName>Glyceraldehyde-3-phosphate dehydrogenase</fullName>
        <shortName>GAPDH</shortName>
        <ecNumber evidence="1">1.2.1.12</ecNumber>
    </recommendedName>
    <alternativeName>
        <fullName evidence="9">Peptidyl-cysteine S-nitrosylase GAPDH</fullName>
        <ecNumber evidence="2">2.6.99.-</ecNumber>
    </alternativeName>
</protein>
<organism>
    <name type="scientific">Sus scrofa</name>
    <name type="common">Pig</name>
    <dbReference type="NCBI Taxonomy" id="9823"/>
    <lineage>
        <taxon>Eukaryota</taxon>
        <taxon>Metazoa</taxon>
        <taxon>Chordata</taxon>
        <taxon>Craniata</taxon>
        <taxon>Vertebrata</taxon>
        <taxon>Euteleostomi</taxon>
        <taxon>Mammalia</taxon>
        <taxon>Eutheria</taxon>
        <taxon>Laurasiatheria</taxon>
        <taxon>Artiodactyla</taxon>
        <taxon>Suina</taxon>
        <taxon>Suidae</taxon>
        <taxon>Sus</taxon>
    </lineage>
</organism>
<accession>P00355</accession>
<accession>O18816</accession>
<accession>P79299</accession>
<accession>P79317</accession>
<accession>Q29546</accession>
<keyword id="KW-0002">3D-structure</keyword>
<keyword id="KW-0007">Acetylation</keyword>
<keyword id="KW-0013">ADP-ribosylation</keyword>
<keyword id="KW-0053">Apoptosis</keyword>
<keyword id="KW-0963">Cytoplasm</keyword>
<keyword id="KW-0206">Cytoskeleton</keyword>
<keyword id="KW-0903">Direct protein sequencing</keyword>
<keyword id="KW-0324">Glycolysis</keyword>
<keyword id="KW-0391">Immunity</keyword>
<keyword id="KW-0399">Innate immunity</keyword>
<keyword id="KW-1017">Isopeptide bond</keyword>
<keyword id="KW-0488">Methylation</keyword>
<keyword id="KW-0520">NAD</keyword>
<keyword id="KW-0539">Nucleus</keyword>
<keyword id="KW-0560">Oxidoreductase</keyword>
<keyword id="KW-0597">Phosphoprotein</keyword>
<keyword id="KW-1185">Reference proteome</keyword>
<keyword id="KW-0702">S-nitrosylation</keyword>
<keyword id="KW-0808">Transferase</keyword>
<keyword id="KW-0810">Translation regulation</keyword>
<keyword id="KW-0832">Ubl conjugation</keyword>
<evidence type="ECO:0000250" key="1">
    <source>
        <dbReference type="UniProtKB" id="P04406"/>
    </source>
</evidence>
<evidence type="ECO:0000250" key="2">
    <source>
        <dbReference type="UniProtKB" id="P04797"/>
    </source>
</evidence>
<evidence type="ECO:0000250" key="3">
    <source>
        <dbReference type="UniProtKB" id="P10096"/>
    </source>
</evidence>
<evidence type="ECO:0000250" key="4">
    <source>
        <dbReference type="UniProtKB" id="P16858"/>
    </source>
</evidence>
<evidence type="ECO:0000250" key="5">
    <source>
        <dbReference type="UniProtKB" id="P22513"/>
    </source>
</evidence>
<evidence type="ECO:0000255" key="6">
    <source>
        <dbReference type="PROSITE-ProRule" id="PRU10009"/>
    </source>
</evidence>
<evidence type="ECO:0000269" key="7">
    <source>
    </source>
</evidence>
<evidence type="ECO:0000269" key="8">
    <source>
    </source>
</evidence>
<evidence type="ECO:0000305" key="9"/>
<evidence type="ECO:0007829" key="10">
    <source>
        <dbReference type="PDB" id="5TSO"/>
    </source>
</evidence>
<proteinExistence type="evidence at protein level"/>
<feature type="initiator methionine" description="Removed" evidence="7 8">
    <location>
        <position position="1"/>
    </location>
</feature>
<feature type="chain" id="PRO_0000145491" description="Glyceraldehyde-3-phosphate dehydrogenase">
    <location>
        <begin position="2"/>
        <end position="333"/>
    </location>
</feature>
<feature type="region of interest" description="Interaction with WARS1" evidence="1">
    <location>
        <begin position="2"/>
        <end position="146"/>
    </location>
</feature>
<feature type="short sequence motif" description="[IL]-x-C-x-x-[DE] motif" evidence="1">
    <location>
        <begin position="243"/>
        <end position="248"/>
    </location>
</feature>
<feature type="active site" description="Nucleophile" evidence="6">
    <location>
        <position position="150"/>
    </location>
</feature>
<feature type="binding site" evidence="1">
    <location>
        <begin position="11"/>
        <end position="12"/>
    </location>
    <ligand>
        <name>NAD(+)</name>
        <dbReference type="ChEBI" id="CHEBI:57540"/>
    </ligand>
</feature>
<feature type="binding site" evidence="1">
    <location>
        <position position="33"/>
    </location>
    <ligand>
        <name>NAD(+)</name>
        <dbReference type="ChEBI" id="CHEBI:57540"/>
    </ligand>
</feature>
<feature type="binding site" evidence="1">
    <location>
        <position position="78"/>
    </location>
    <ligand>
        <name>NAD(+)</name>
        <dbReference type="ChEBI" id="CHEBI:57540"/>
    </ligand>
</feature>
<feature type="binding site" evidence="1">
    <location>
        <position position="120"/>
    </location>
    <ligand>
        <name>NAD(+)</name>
        <dbReference type="ChEBI" id="CHEBI:57540"/>
    </ligand>
</feature>
<feature type="binding site" evidence="5">
    <location>
        <begin position="149"/>
        <end position="151"/>
    </location>
    <ligand>
        <name>D-glyceraldehyde 3-phosphate</name>
        <dbReference type="ChEBI" id="CHEBI:59776"/>
    </ligand>
</feature>
<feature type="binding site" evidence="5">
    <location>
        <position position="180"/>
    </location>
    <ligand>
        <name>D-glyceraldehyde 3-phosphate</name>
        <dbReference type="ChEBI" id="CHEBI:59776"/>
    </ligand>
</feature>
<feature type="binding site" evidence="5">
    <location>
        <begin position="209"/>
        <end position="210"/>
    </location>
    <ligand>
        <name>D-glyceraldehyde 3-phosphate</name>
        <dbReference type="ChEBI" id="CHEBI:59776"/>
    </ligand>
</feature>
<feature type="binding site" evidence="5">
    <location>
        <position position="232"/>
    </location>
    <ligand>
        <name>D-glyceraldehyde 3-phosphate</name>
        <dbReference type="ChEBI" id="CHEBI:59776"/>
    </ligand>
</feature>
<feature type="binding site" evidence="1">
    <location>
        <position position="314"/>
    </location>
    <ligand>
        <name>NAD(+)</name>
        <dbReference type="ChEBI" id="CHEBI:57540"/>
    </ligand>
</feature>
<feature type="site" description="Activates thiol group during catalysis" evidence="1">
    <location>
        <position position="177"/>
    </location>
</feature>
<feature type="modified residue" description="N6,N6-dimethyllysine" evidence="1">
    <location>
        <position position="3"/>
    </location>
</feature>
<feature type="modified residue" description="Deamidated asparagine" evidence="1">
    <location>
        <position position="7"/>
    </location>
</feature>
<feature type="modified residue" description="Phosphotyrosine" evidence="1">
    <location>
        <position position="40"/>
    </location>
</feature>
<feature type="modified residue" description="N6-acetyllysine" evidence="1">
    <location>
        <position position="59"/>
    </location>
</feature>
<feature type="modified residue" description="Deamidated asparagine" evidence="1">
    <location>
        <position position="62"/>
    </location>
</feature>
<feature type="modified residue" description="N6,N6-dimethyllysine" evidence="1">
    <location>
        <position position="64"/>
    </location>
</feature>
<feature type="modified residue" description="Deamidated asparagine" evidence="1">
    <location>
        <position position="68"/>
    </location>
</feature>
<feature type="modified residue" description="Phosphothreonine" evidence="1">
    <location>
        <position position="73"/>
    </location>
</feature>
<feature type="modified residue" description="Phosphoserine" evidence="1">
    <location>
        <position position="120"/>
    </location>
</feature>
<feature type="modified residue" description="Phosphoserine" evidence="1">
    <location>
        <position position="146"/>
    </location>
</feature>
<feature type="modified residue" description="Deamidated asparagine" evidence="1">
    <location>
        <position position="147"/>
    </location>
</feature>
<feature type="modified residue" description="Phosphoserine" evidence="1">
    <location>
        <position position="149"/>
    </location>
</feature>
<feature type="modified residue" description="ADP-ribosylcysteine; by autocatalysis; in irreversibly inhibited form" evidence="2">
    <location>
        <position position="150"/>
    </location>
</feature>
<feature type="modified residue" description="Cysteine persulfide" evidence="4">
    <location>
        <position position="150"/>
    </location>
</feature>
<feature type="modified residue" description="S-(2-succinyl)cysteine" evidence="2">
    <location>
        <position position="150"/>
    </location>
</feature>
<feature type="modified residue" description="S-nitrosocysteine; in reversibly inhibited form" evidence="2">
    <location>
        <position position="150"/>
    </location>
</feature>
<feature type="modified residue" description="Phosphothreonine" evidence="1">
    <location>
        <position position="151"/>
    </location>
</feature>
<feature type="modified residue" description="Deamidated asparagine" evidence="1">
    <location>
        <position position="153"/>
    </location>
</feature>
<feature type="modified residue" description="Phosphothreonine" evidence="1">
    <location>
        <position position="175"/>
    </location>
</feature>
<feature type="modified residue" description="Phosphothreonine" evidence="1">
    <location>
        <position position="180"/>
    </location>
</feature>
<feature type="modified residue" description="Phosphothreonine" evidence="1">
    <location>
        <position position="182"/>
    </location>
</feature>
<feature type="modified residue" description="N6,N6-dimethyllysine; alternate" evidence="1">
    <location>
        <position position="192"/>
    </location>
</feature>
<feature type="modified residue" description="N6-acetyllysine; alternate" evidence="1">
    <location>
        <position position="192"/>
    </location>
</feature>
<feature type="modified residue" description="N6-malonyllysine; alternate" evidence="1">
    <location>
        <position position="192"/>
    </location>
</feature>
<feature type="modified residue" description="Phosphothreonine" evidence="1">
    <location>
        <position position="209"/>
    </location>
</feature>
<feature type="modified residue" description="N6,N6-dimethyllysine; alternate" evidence="1">
    <location>
        <position position="213"/>
    </location>
</feature>
<feature type="modified residue" description="N6-malonyllysine; alternate" evidence="1">
    <location>
        <position position="213"/>
    </location>
</feature>
<feature type="modified residue" description="N6-acetyllysine" evidence="1">
    <location>
        <position position="217"/>
    </location>
</feature>
<feature type="modified residue" description="Deamidated asparagine" evidence="1">
    <location>
        <position position="223"/>
    </location>
</feature>
<feature type="modified residue" description="N6,N6-dimethyllysine; alternate" evidence="1">
    <location>
        <position position="225"/>
    </location>
</feature>
<feature type="modified residue" description="N6-acetyllysine; alternate" evidence="1">
    <location>
        <position position="225"/>
    </location>
</feature>
<feature type="modified residue" description="Phosphothreonine" evidence="1">
    <location>
        <position position="227"/>
    </location>
</feature>
<feature type="modified residue" description="Phosphothreonine" evidence="1">
    <location>
        <position position="235"/>
    </location>
</feature>
<feature type="modified residue" description="Phosphoserine" evidence="1">
    <location>
        <position position="239"/>
    </location>
</feature>
<feature type="modified residue" description="S-(2-succinyl)cysteine" evidence="2">
    <location>
        <position position="245"/>
    </location>
</feature>
<feature type="modified residue" description="S-nitrosocysteine" evidence="1">
    <location>
        <position position="245"/>
    </location>
</feature>
<feature type="modified residue" description="N6-acetyllysine" evidence="1">
    <location>
        <position position="252"/>
    </location>
</feature>
<feature type="modified residue" description="N6,N6-dimethyllysine" evidence="1">
    <location>
        <position position="258"/>
    </location>
</feature>
<feature type="modified residue" description="N6,N6-dimethyllysine" evidence="1">
    <location>
        <position position="261"/>
    </location>
</feature>
<feature type="modified residue" description="Phosphoserine" evidence="1">
    <location>
        <position position="310"/>
    </location>
</feature>
<feature type="modified residue" description="Deamidated asparagine" evidence="1">
    <location>
        <position position="314"/>
    </location>
</feature>
<feature type="modified residue" description="Phosphoserine" evidence="1">
    <location>
        <position position="331"/>
    </location>
</feature>
<feature type="modified residue" description="N6,N6-dimethyllysine" evidence="1">
    <location>
        <position position="332"/>
    </location>
</feature>
<feature type="cross-link" description="Glycyl lysine isopeptide (Lys-Gly) (interchain with G-Cter in SUMO2)" evidence="1">
    <location>
        <position position="184"/>
    </location>
</feature>
<feature type="sequence conflict" description="In Ref. 3; AA sequence." evidence="9" ref="3">
    <original>N</original>
    <variation>D</variation>
    <location>
        <position position="7"/>
    </location>
</feature>
<feature type="sequence conflict" description="In Ref. 3; AA sequence." evidence="9" ref="3">
    <original>N</original>
    <variation>D</variation>
    <location>
        <position position="62"/>
    </location>
</feature>
<feature type="sequence conflict" description="In Ref. 3; AA sequence." evidence="9" ref="3">
    <original>N</original>
    <variation>D</variation>
    <location>
        <position position="68"/>
    </location>
</feature>
<feature type="sequence conflict" description="In Ref. 1; AAB94053." evidence="9" ref="1">
    <original>KA</original>
    <variation>NP</variation>
    <location>
        <begin position="70"/>
        <end position="71"/>
    </location>
</feature>
<feature type="sequence conflict" description="In Ref. 1; AAB94053." evidence="9" ref="1">
    <original>N</original>
    <variation>K</variation>
    <location>
        <position position="82"/>
    </location>
</feature>
<feature type="sequence conflict" description="In Ref. 3; AA sequence." evidence="9" ref="3">
    <original>AT</original>
    <variation>TA</variation>
    <location>
        <begin position="90"/>
        <end position="91"/>
    </location>
</feature>
<feature type="sequence conflict" description="In Ref. 1; AAB94053." evidence="9" ref="1">
    <original>T</original>
    <variation>E</variation>
    <location>
        <position position="91"/>
    </location>
</feature>
<feature type="sequence conflict" description="In Ref. 1; AAB94053." evidence="9" ref="1">
    <original>V</original>
    <variation>M</variation>
    <location>
        <position position="133"/>
    </location>
</feature>
<feature type="sequence conflict" description="In Ref. 1; AAB94053." evidence="9" ref="1">
    <original>V</original>
    <variation>I</variation>
    <location>
        <position position="145"/>
    </location>
</feature>
<feature type="sequence conflict" description="In Ref. 1; AAB94053." evidence="9" ref="1">
    <original>H</original>
    <variation>N</variation>
    <location>
        <position position="165"/>
    </location>
</feature>
<feature type="sequence conflict" description="In Ref. 1; AAB94053." evidence="9" ref="1">
    <original>A</original>
    <variation>L</variation>
    <location>
        <position position="201"/>
    </location>
</feature>
<feature type="sequence conflict" description="In Ref. 3; AA sequence." evidence="9" ref="3">
    <original>N</original>
    <variation>D</variation>
    <location>
        <position position="223"/>
    </location>
</feature>
<feature type="sequence conflict" description="In Ref. 1; AAB94053." evidence="9" ref="1">
    <original>P</original>
    <variation>A</variation>
    <location>
        <position position="236"/>
    </location>
</feature>
<feature type="sequence conflict" description="In Ref. 1; AAB94053." evidence="9" ref="1">
    <original>D</original>
    <variation>H</variation>
    <location>
        <position position="277"/>
    </location>
</feature>
<feature type="sequence conflict" description="In Ref. 1; AAB94053." evidence="9" ref="1">
    <original>C</original>
    <variation>S</variation>
    <location>
        <position position="282"/>
    </location>
</feature>
<feature type="sequence conflict" description="In Ref. 3; AA sequence." evidence="9" ref="3">
    <original>SD</original>
    <variation>DS</variation>
    <location>
        <begin position="286"/>
        <end position="287"/>
    </location>
</feature>
<feature type="sequence conflict" description="In Ref. 1; AAB94053." evidence="9" ref="1">
    <original>W</original>
    <variation>S</variation>
    <location>
        <position position="311"/>
    </location>
</feature>
<feature type="sequence conflict" description="In Ref. 7; AAB40155." evidence="9" ref="7">
    <original>R</original>
    <variation>W</variation>
    <location>
        <position position="321"/>
    </location>
</feature>
<feature type="strand" evidence="10">
    <location>
        <begin position="3"/>
        <end position="7"/>
    </location>
</feature>
<feature type="helix" evidence="10">
    <location>
        <begin position="11"/>
        <end position="23"/>
    </location>
</feature>
<feature type="strand" evidence="10">
    <location>
        <begin position="25"/>
        <end position="32"/>
    </location>
</feature>
<feature type="helix" evidence="10">
    <location>
        <begin position="38"/>
        <end position="46"/>
    </location>
</feature>
<feature type="turn" evidence="10">
    <location>
        <begin position="49"/>
        <end position="51"/>
    </location>
</feature>
<feature type="strand" evidence="10">
    <location>
        <begin position="58"/>
        <end position="61"/>
    </location>
</feature>
<feature type="strand" evidence="10">
    <location>
        <begin position="64"/>
        <end position="67"/>
    </location>
</feature>
<feature type="strand" evidence="10">
    <location>
        <begin position="70"/>
        <end position="75"/>
    </location>
</feature>
<feature type="helix" evidence="10">
    <location>
        <begin position="80"/>
        <end position="82"/>
    </location>
</feature>
<feature type="helix" evidence="10">
    <location>
        <begin position="85"/>
        <end position="88"/>
    </location>
</feature>
<feature type="strand" evidence="10">
    <location>
        <begin position="92"/>
        <end position="95"/>
    </location>
</feature>
<feature type="strand" evidence="10">
    <location>
        <begin position="97"/>
        <end position="99"/>
    </location>
</feature>
<feature type="helix" evidence="10">
    <location>
        <begin position="103"/>
        <end position="106"/>
    </location>
</feature>
<feature type="helix" evidence="10">
    <location>
        <begin position="108"/>
        <end position="111"/>
    </location>
</feature>
<feature type="strand" evidence="10">
    <location>
        <begin position="115"/>
        <end position="121"/>
    </location>
</feature>
<feature type="strand" evidence="10">
    <location>
        <begin position="124"/>
        <end position="126"/>
    </location>
</feature>
<feature type="turn" evidence="10">
    <location>
        <begin position="131"/>
        <end position="133"/>
    </location>
</feature>
<feature type="helix" evidence="10">
    <location>
        <begin position="135"/>
        <end position="137"/>
    </location>
</feature>
<feature type="strand" evidence="10">
    <location>
        <begin position="143"/>
        <end position="146"/>
    </location>
</feature>
<feature type="helix" evidence="10">
    <location>
        <begin position="150"/>
        <end position="166"/>
    </location>
</feature>
<feature type="strand" evidence="10">
    <location>
        <begin position="168"/>
        <end position="177"/>
    </location>
</feature>
<feature type="strand" evidence="10">
    <location>
        <begin position="183"/>
        <end position="187"/>
    </location>
</feature>
<feature type="helix" evidence="10">
    <location>
        <begin position="194"/>
        <end position="197"/>
    </location>
</feature>
<feature type="turn" evidence="10">
    <location>
        <begin position="200"/>
        <end position="202"/>
    </location>
</feature>
<feature type="strand" evidence="10">
    <location>
        <begin position="205"/>
        <end position="207"/>
    </location>
</feature>
<feature type="helix" evidence="10">
    <location>
        <begin position="211"/>
        <end position="218"/>
    </location>
</feature>
<feature type="helix" evidence="10">
    <location>
        <begin position="220"/>
        <end position="222"/>
    </location>
</feature>
<feature type="turn" evidence="10">
    <location>
        <begin position="223"/>
        <end position="225"/>
    </location>
</feature>
<feature type="strand" evidence="10">
    <location>
        <begin position="226"/>
        <end position="232"/>
    </location>
</feature>
<feature type="strand" evidence="10">
    <location>
        <begin position="239"/>
        <end position="249"/>
    </location>
</feature>
<feature type="helix" evidence="10">
    <location>
        <begin position="253"/>
        <end position="265"/>
    </location>
</feature>
<feature type="turn" evidence="10">
    <location>
        <begin position="266"/>
        <end position="271"/>
    </location>
</feature>
<feature type="strand" evidence="10">
    <location>
        <begin position="272"/>
        <end position="275"/>
    </location>
</feature>
<feature type="helix" evidence="10">
    <location>
        <begin position="281"/>
        <end position="284"/>
    </location>
</feature>
<feature type="strand" evidence="10">
    <location>
        <begin position="290"/>
        <end position="294"/>
    </location>
</feature>
<feature type="turn" evidence="10">
    <location>
        <begin position="295"/>
        <end position="297"/>
    </location>
</feature>
<feature type="strand" evidence="10">
    <location>
        <begin position="299"/>
        <end position="302"/>
    </location>
</feature>
<feature type="strand" evidence="10">
    <location>
        <begin position="305"/>
        <end position="312"/>
    </location>
</feature>
<feature type="helix" evidence="10">
    <location>
        <begin position="316"/>
        <end position="332"/>
    </location>
</feature>
<name>G3P_PIG</name>
<dbReference type="EC" id="1.2.1.12" evidence="1"/>
<dbReference type="EC" id="2.6.99.-" evidence="2"/>
<dbReference type="EMBL" id="AF017079">
    <property type="protein sequence ID" value="AAB94053.1"/>
    <property type="molecule type" value="mRNA"/>
</dbReference>
<dbReference type="EMBL" id="Z84063">
    <property type="protein sequence ID" value="CAB06323.1"/>
    <property type="molecule type" value="mRNA"/>
</dbReference>
<dbReference type="EMBL" id="U48832">
    <property type="protein sequence ID" value="AAA91804.1"/>
    <property type="molecule type" value="mRNA"/>
</dbReference>
<dbReference type="EMBL" id="U82261">
    <property type="protein sequence ID" value="AAB40155.1"/>
    <property type="molecule type" value="mRNA"/>
</dbReference>
<dbReference type="EMBL" id="X94251">
    <property type="protein sequence ID" value="CAA63935.1"/>
    <property type="molecule type" value="mRNA"/>
</dbReference>
<dbReference type="PIR" id="B12055">
    <property type="entry name" value="B12055"/>
</dbReference>
<dbReference type="RefSeq" id="NP_001193288.1">
    <property type="nucleotide sequence ID" value="NM_001206359.1"/>
</dbReference>
<dbReference type="PDB" id="5DDI">
    <property type="method" value="X-ray"/>
    <property type="resolution" value="2.40 A"/>
    <property type="chains" value="P/R/S=2-333"/>
</dbReference>
<dbReference type="PDB" id="5TSO">
    <property type="method" value="X-ray"/>
    <property type="resolution" value="1.90 A"/>
    <property type="chains" value="P/R/S=1-333"/>
</dbReference>
<dbReference type="PDBsum" id="5DDI"/>
<dbReference type="PDBsum" id="5TSO"/>
<dbReference type="SMR" id="P00355"/>
<dbReference type="FunCoup" id="P00355">
    <property type="interactions" value="698"/>
</dbReference>
<dbReference type="IntAct" id="P00355">
    <property type="interactions" value="1"/>
</dbReference>
<dbReference type="STRING" id="9823.ENSSSCP00000035519"/>
<dbReference type="Allergome" id="12129">
    <property type="allergen name" value="Sus s GAPDH"/>
</dbReference>
<dbReference type="PaxDb" id="9823-ENSSSCP00000000740"/>
<dbReference type="PeptideAtlas" id="P00355"/>
<dbReference type="Ensembl" id="ENSSSCT00000000756.4">
    <property type="protein sequence ID" value="ENSSSCP00000000740.4"/>
    <property type="gene ID" value="ENSSSCG00000000694.4"/>
</dbReference>
<dbReference type="Ensembl" id="ENSSSCT00015092759.1">
    <property type="protein sequence ID" value="ENSSSCP00015037932.1"/>
    <property type="gene ID" value="ENSSSCG00015069184.1"/>
</dbReference>
<dbReference type="Ensembl" id="ENSSSCT00035111381.1">
    <property type="protein sequence ID" value="ENSSSCP00035048787.1"/>
    <property type="gene ID" value="ENSSSCG00035081064.1"/>
</dbReference>
<dbReference type="Ensembl" id="ENSSSCT00035111396.1">
    <property type="protein sequence ID" value="ENSSSCP00035048801.1"/>
    <property type="gene ID" value="ENSSSCG00035081064.1"/>
</dbReference>
<dbReference type="Ensembl" id="ENSSSCT00040088131.1">
    <property type="protein sequence ID" value="ENSSSCP00040038735.1"/>
    <property type="gene ID" value="ENSSSCG00040064450.1"/>
</dbReference>
<dbReference type="Ensembl" id="ENSSSCT00045030090.1">
    <property type="protein sequence ID" value="ENSSSCP00045020842.1"/>
    <property type="gene ID" value="ENSSSCG00045017499.1"/>
</dbReference>
<dbReference type="Ensembl" id="ENSSSCT00055060969.1">
    <property type="protein sequence ID" value="ENSSSCP00055048878.1"/>
    <property type="gene ID" value="ENSSSCG00055030580.1"/>
</dbReference>
<dbReference type="Ensembl" id="ENSSSCT00060058387.1">
    <property type="protein sequence ID" value="ENSSSCP00060024997.1"/>
    <property type="gene ID" value="ENSSSCG00060043031.1"/>
</dbReference>
<dbReference type="Ensembl" id="ENSSSCT00065107183.1">
    <property type="protein sequence ID" value="ENSSSCP00065047768.1"/>
    <property type="gene ID" value="ENSSSCG00065077443.1"/>
</dbReference>
<dbReference type="Ensembl" id="ENSSSCT00070038969.1">
    <property type="protein sequence ID" value="ENSSSCP00070032633.1"/>
    <property type="gene ID" value="ENSSSCG00070019692.1"/>
</dbReference>
<dbReference type="Ensembl" id="ENSSSCT00070038975.1">
    <property type="protein sequence ID" value="ENSSSCP00070032639.1"/>
    <property type="gene ID" value="ENSSSCG00070019692.1"/>
</dbReference>
<dbReference type="Ensembl" id="ENSSSCT00085024290">
    <property type="protein sequence ID" value="ENSSSCP00085016693"/>
    <property type="gene ID" value="ENSSSCG00085012926"/>
</dbReference>
<dbReference type="Ensembl" id="ENSSSCT00090043939">
    <property type="protein sequence ID" value="ENSSSCP00090027467"/>
    <property type="gene ID" value="ENSSSCG00090024749"/>
</dbReference>
<dbReference type="Ensembl" id="ENSSSCT00110039530">
    <property type="protein sequence ID" value="ENSSSCP00110027373"/>
    <property type="gene ID" value="ENSSSCG00110020438"/>
</dbReference>
<dbReference type="Ensembl" id="ENSSSCT00115031571">
    <property type="protein sequence ID" value="ENSSSCP00115030011"/>
    <property type="gene ID" value="ENSSSCG00115017826"/>
</dbReference>
<dbReference type="Ensembl" id="ENSSSCT00130042632">
    <property type="protein sequence ID" value="ENSSSCP00130030103"/>
    <property type="gene ID" value="ENSSSCG00130021986"/>
</dbReference>
<dbReference type="GeneID" id="396823"/>
<dbReference type="KEGG" id="ssc:396823"/>
<dbReference type="CTD" id="2597"/>
<dbReference type="VGNC" id="VGNC:103283">
    <property type="gene designation" value="GAPDH"/>
</dbReference>
<dbReference type="eggNOG" id="KOG0657">
    <property type="taxonomic scope" value="Eukaryota"/>
</dbReference>
<dbReference type="GeneTree" id="ENSGT00940000153298"/>
<dbReference type="InParanoid" id="P00355"/>
<dbReference type="OMA" id="YGYTCNM"/>
<dbReference type="OrthoDB" id="9669797at2759"/>
<dbReference type="Reactome" id="R-SSC-70171">
    <property type="pathway name" value="Glycolysis"/>
</dbReference>
<dbReference type="Reactome" id="R-SSC-70263">
    <property type="pathway name" value="Gluconeogenesis"/>
</dbReference>
<dbReference type="UniPathway" id="UPA00109">
    <property type="reaction ID" value="UER00184"/>
</dbReference>
<dbReference type="Proteomes" id="UP000008227">
    <property type="component" value="Chromosome 5"/>
</dbReference>
<dbReference type="Proteomes" id="UP000314985">
    <property type="component" value="Chromosome 5"/>
</dbReference>
<dbReference type="Proteomes" id="UP000694570">
    <property type="component" value="Unplaced"/>
</dbReference>
<dbReference type="Proteomes" id="UP000694571">
    <property type="component" value="Unplaced"/>
</dbReference>
<dbReference type="Proteomes" id="UP000694720">
    <property type="component" value="Unplaced"/>
</dbReference>
<dbReference type="Proteomes" id="UP000694722">
    <property type="component" value="Unplaced"/>
</dbReference>
<dbReference type="Proteomes" id="UP000694723">
    <property type="component" value="Unplaced"/>
</dbReference>
<dbReference type="Proteomes" id="UP000694724">
    <property type="component" value="Unplaced"/>
</dbReference>
<dbReference type="Proteomes" id="UP000694725">
    <property type="component" value="Unplaced"/>
</dbReference>
<dbReference type="Proteomes" id="UP000694726">
    <property type="component" value="Unplaced"/>
</dbReference>
<dbReference type="Proteomes" id="UP000694727">
    <property type="component" value="Unplaced"/>
</dbReference>
<dbReference type="Proteomes" id="UP000694728">
    <property type="component" value="Unplaced"/>
</dbReference>
<dbReference type="GO" id="GO:0005737">
    <property type="term" value="C:cytoplasm"/>
    <property type="evidence" value="ECO:0000250"/>
    <property type="project" value="UniProtKB"/>
</dbReference>
<dbReference type="GO" id="GO:0005829">
    <property type="term" value="C:cytosol"/>
    <property type="evidence" value="ECO:0000250"/>
    <property type="project" value="UniProtKB"/>
</dbReference>
<dbReference type="GO" id="GO:0097452">
    <property type="term" value="C:GAIT complex"/>
    <property type="evidence" value="ECO:0000250"/>
    <property type="project" value="UniProtKB"/>
</dbReference>
<dbReference type="GO" id="GO:0005811">
    <property type="term" value="C:lipid droplet"/>
    <property type="evidence" value="ECO:0007669"/>
    <property type="project" value="Ensembl"/>
</dbReference>
<dbReference type="GO" id="GO:0015630">
    <property type="term" value="C:microtubule cytoskeleton"/>
    <property type="evidence" value="ECO:0000250"/>
    <property type="project" value="UniProtKB"/>
</dbReference>
<dbReference type="GO" id="GO:0031965">
    <property type="term" value="C:nuclear membrane"/>
    <property type="evidence" value="ECO:0007669"/>
    <property type="project" value="Ensembl"/>
</dbReference>
<dbReference type="GO" id="GO:0005634">
    <property type="term" value="C:nucleus"/>
    <property type="evidence" value="ECO:0000250"/>
    <property type="project" value="UniProtKB"/>
</dbReference>
<dbReference type="GO" id="GO:0005886">
    <property type="term" value="C:plasma membrane"/>
    <property type="evidence" value="ECO:0007669"/>
    <property type="project" value="Ensembl"/>
</dbReference>
<dbReference type="GO" id="GO:1990904">
    <property type="term" value="C:ribonucleoprotein complex"/>
    <property type="evidence" value="ECO:0007669"/>
    <property type="project" value="Ensembl"/>
</dbReference>
<dbReference type="GO" id="GO:0019828">
    <property type="term" value="F:aspartic-type endopeptidase inhibitor activity"/>
    <property type="evidence" value="ECO:0007669"/>
    <property type="project" value="Ensembl"/>
</dbReference>
<dbReference type="GO" id="GO:0097718">
    <property type="term" value="F:disordered domain specific binding"/>
    <property type="evidence" value="ECO:0007669"/>
    <property type="project" value="Ensembl"/>
</dbReference>
<dbReference type="GO" id="GO:0004365">
    <property type="term" value="F:glyceraldehyde-3-phosphate dehydrogenase (NAD+) (phosphorylating) activity"/>
    <property type="evidence" value="ECO:0000250"/>
    <property type="project" value="UniProtKB"/>
</dbReference>
<dbReference type="GO" id="GO:0042802">
    <property type="term" value="F:identical protein binding"/>
    <property type="evidence" value="ECO:0007669"/>
    <property type="project" value="Ensembl"/>
</dbReference>
<dbReference type="GO" id="GO:0008017">
    <property type="term" value="F:microtubule binding"/>
    <property type="evidence" value="ECO:0000250"/>
    <property type="project" value="UniProtKB"/>
</dbReference>
<dbReference type="GO" id="GO:0051287">
    <property type="term" value="F:NAD binding"/>
    <property type="evidence" value="ECO:0007669"/>
    <property type="project" value="InterPro"/>
</dbReference>
<dbReference type="GO" id="GO:0050661">
    <property type="term" value="F:NADP binding"/>
    <property type="evidence" value="ECO:0007669"/>
    <property type="project" value="InterPro"/>
</dbReference>
<dbReference type="GO" id="GO:0035605">
    <property type="term" value="F:peptidyl-cysteine S-nitrosylase activity"/>
    <property type="evidence" value="ECO:0000250"/>
    <property type="project" value="UniProtKB"/>
</dbReference>
<dbReference type="GO" id="GO:0061844">
    <property type="term" value="P:antimicrobial humoral immune response mediated by antimicrobial peptide"/>
    <property type="evidence" value="ECO:0007669"/>
    <property type="project" value="Ensembl"/>
</dbReference>
<dbReference type="GO" id="GO:0071346">
    <property type="term" value="P:cellular response to type II interferon"/>
    <property type="evidence" value="ECO:0007669"/>
    <property type="project" value="Ensembl"/>
</dbReference>
<dbReference type="GO" id="GO:0050832">
    <property type="term" value="P:defense response to fungus"/>
    <property type="evidence" value="ECO:0007669"/>
    <property type="project" value="Ensembl"/>
</dbReference>
<dbReference type="GO" id="GO:0006006">
    <property type="term" value="P:glucose metabolic process"/>
    <property type="evidence" value="ECO:0007669"/>
    <property type="project" value="InterPro"/>
</dbReference>
<dbReference type="GO" id="GO:0006096">
    <property type="term" value="P:glycolytic process"/>
    <property type="evidence" value="ECO:0007669"/>
    <property type="project" value="UniProtKB-UniPathway"/>
</dbReference>
<dbReference type="GO" id="GO:0051873">
    <property type="term" value="P:killing by host of symbiont cells"/>
    <property type="evidence" value="ECO:0007669"/>
    <property type="project" value="Ensembl"/>
</dbReference>
<dbReference type="GO" id="GO:0000226">
    <property type="term" value="P:microtubule cytoskeleton organization"/>
    <property type="evidence" value="ECO:0000250"/>
    <property type="project" value="UniProtKB"/>
</dbReference>
<dbReference type="GO" id="GO:0017148">
    <property type="term" value="P:negative regulation of translation"/>
    <property type="evidence" value="ECO:0007669"/>
    <property type="project" value="Ensembl"/>
</dbReference>
<dbReference type="GO" id="GO:0051402">
    <property type="term" value="P:neuron apoptotic process"/>
    <property type="evidence" value="ECO:0000250"/>
    <property type="project" value="UniProtKB"/>
</dbReference>
<dbReference type="GO" id="GO:0035606">
    <property type="term" value="P:peptidyl-cysteine S-trans-nitrosylation"/>
    <property type="evidence" value="ECO:0000250"/>
    <property type="project" value="UniProtKB"/>
</dbReference>
<dbReference type="GO" id="GO:0043123">
    <property type="term" value="P:positive regulation of canonical NF-kappaB signal transduction"/>
    <property type="evidence" value="ECO:0000250"/>
    <property type="project" value="UniProtKB"/>
</dbReference>
<dbReference type="GO" id="GO:0032481">
    <property type="term" value="P:positive regulation of type I interferon production"/>
    <property type="evidence" value="ECO:0000250"/>
    <property type="project" value="UniProtKB"/>
</dbReference>
<dbReference type="GO" id="GO:0050821">
    <property type="term" value="P:protein stabilization"/>
    <property type="evidence" value="ECO:0000250"/>
    <property type="project" value="UniProtKB"/>
</dbReference>
<dbReference type="CDD" id="cd18126">
    <property type="entry name" value="GAPDH_I_C"/>
    <property type="match status" value="1"/>
</dbReference>
<dbReference type="CDD" id="cd05214">
    <property type="entry name" value="GAPDH_I_N"/>
    <property type="match status" value="1"/>
</dbReference>
<dbReference type="FunFam" id="3.30.360.10:FF:000001">
    <property type="entry name" value="Glyceraldehyde-3-phosphate dehydrogenase"/>
    <property type="match status" value="1"/>
</dbReference>
<dbReference type="FunFam" id="3.40.50.720:FF:001161">
    <property type="entry name" value="Glyceraldehyde-3-phosphate dehydrogenase"/>
    <property type="match status" value="1"/>
</dbReference>
<dbReference type="Gene3D" id="3.30.360.10">
    <property type="entry name" value="Dihydrodipicolinate Reductase, domain 2"/>
    <property type="match status" value="1"/>
</dbReference>
<dbReference type="Gene3D" id="3.40.50.720">
    <property type="entry name" value="NAD(P)-binding Rossmann-like Domain"/>
    <property type="match status" value="1"/>
</dbReference>
<dbReference type="InterPro" id="IPR020831">
    <property type="entry name" value="GlycerAld/Erythrose_P_DH"/>
</dbReference>
<dbReference type="InterPro" id="IPR020830">
    <property type="entry name" value="GlycerAld_3-P_DH_AS"/>
</dbReference>
<dbReference type="InterPro" id="IPR020829">
    <property type="entry name" value="GlycerAld_3-P_DH_cat"/>
</dbReference>
<dbReference type="InterPro" id="IPR020828">
    <property type="entry name" value="GlycerAld_3-P_DH_NAD(P)-bd"/>
</dbReference>
<dbReference type="InterPro" id="IPR006424">
    <property type="entry name" value="Glyceraldehyde-3-P_DH_1"/>
</dbReference>
<dbReference type="InterPro" id="IPR036291">
    <property type="entry name" value="NAD(P)-bd_dom_sf"/>
</dbReference>
<dbReference type="NCBIfam" id="TIGR01534">
    <property type="entry name" value="GAPDH-I"/>
    <property type="match status" value="1"/>
</dbReference>
<dbReference type="PANTHER" id="PTHR10836">
    <property type="entry name" value="GLYCERALDEHYDE 3-PHOSPHATE DEHYDROGENASE"/>
    <property type="match status" value="1"/>
</dbReference>
<dbReference type="PANTHER" id="PTHR10836:SF111">
    <property type="entry name" value="GLYCERALDEHYDE-3-PHOSPHATE DEHYDROGENASE"/>
    <property type="match status" value="1"/>
</dbReference>
<dbReference type="Pfam" id="PF02800">
    <property type="entry name" value="Gp_dh_C"/>
    <property type="match status" value="1"/>
</dbReference>
<dbReference type="Pfam" id="PF00044">
    <property type="entry name" value="Gp_dh_N"/>
    <property type="match status" value="1"/>
</dbReference>
<dbReference type="PIRSF" id="PIRSF000149">
    <property type="entry name" value="GAP_DH"/>
    <property type="match status" value="1"/>
</dbReference>
<dbReference type="PRINTS" id="PR00078">
    <property type="entry name" value="G3PDHDRGNASE"/>
</dbReference>
<dbReference type="SMART" id="SM00846">
    <property type="entry name" value="Gp_dh_N"/>
    <property type="match status" value="1"/>
</dbReference>
<dbReference type="SUPFAM" id="SSF55347">
    <property type="entry name" value="Glyceraldehyde-3-phosphate dehydrogenase-like, C-terminal domain"/>
    <property type="match status" value="1"/>
</dbReference>
<dbReference type="SUPFAM" id="SSF51735">
    <property type="entry name" value="NAD(P)-binding Rossmann-fold domains"/>
    <property type="match status" value="1"/>
</dbReference>
<dbReference type="PROSITE" id="PS00071">
    <property type="entry name" value="GAPDH"/>
    <property type="match status" value="1"/>
</dbReference>
<sequence length="333" mass="35836">MVKVGVNGFGRIGRLVTRAAFNSGKVDIVAINDPFIDLHYMVYMFQYDSTHGKFHGTVKAENGKLVINGKAITIFQERDPANIKWGDAGATYVVESTGVFTTMEKAGAHLKGGAKRVIISAPSADAPMFVMGVNHEKYDNSLKIVSNASCTTNCLAPLAKVIHDHFGIVEGLMTTVHAITATQKTVDGPSGKLWRDGRGAAQNIIPASTGAAKAVGKVIPELNGKLTGMAFRVPTPNVSVVDLTCRLEKPAKYDDIKKVVKQASEGPLKGILGYTEDQVVSCDFNSDTHSSTFDAGAGIALNDHFVKLISWYDNEFGYSNRVVDLMVHMASKE</sequence>